<comment type="function">
    <text evidence="1">Specifically methylates the N4 position of cytidine in position 1402 (C1402) of 16S rRNA.</text>
</comment>
<comment type="catalytic activity">
    <reaction evidence="1">
        <text>cytidine(1402) in 16S rRNA + S-adenosyl-L-methionine = N(4)-methylcytidine(1402) in 16S rRNA + S-adenosyl-L-homocysteine + H(+)</text>
        <dbReference type="Rhea" id="RHEA:42928"/>
        <dbReference type="Rhea" id="RHEA-COMP:10286"/>
        <dbReference type="Rhea" id="RHEA-COMP:10287"/>
        <dbReference type="ChEBI" id="CHEBI:15378"/>
        <dbReference type="ChEBI" id="CHEBI:57856"/>
        <dbReference type="ChEBI" id="CHEBI:59789"/>
        <dbReference type="ChEBI" id="CHEBI:74506"/>
        <dbReference type="ChEBI" id="CHEBI:82748"/>
        <dbReference type="EC" id="2.1.1.199"/>
    </reaction>
</comment>
<comment type="subcellular location">
    <subcellularLocation>
        <location evidence="1">Cytoplasm</location>
    </subcellularLocation>
</comment>
<comment type="similarity">
    <text evidence="1">Belongs to the methyltransferase superfamily. RsmH family.</text>
</comment>
<feature type="chain" id="PRO_1000213165" description="Ribosomal RNA small subunit methyltransferase H">
    <location>
        <begin position="1"/>
        <end position="307"/>
    </location>
</feature>
<feature type="binding site" evidence="1">
    <location>
        <begin position="33"/>
        <end position="35"/>
    </location>
    <ligand>
        <name>S-adenosyl-L-methionine</name>
        <dbReference type="ChEBI" id="CHEBI:59789"/>
    </ligand>
</feature>
<feature type="binding site" evidence="1">
    <location>
        <position position="51"/>
    </location>
    <ligand>
        <name>S-adenosyl-L-methionine</name>
        <dbReference type="ChEBI" id="CHEBI:59789"/>
    </ligand>
</feature>
<feature type="binding site" evidence="1">
    <location>
        <position position="82"/>
    </location>
    <ligand>
        <name>S-adenosyl-L-methionine</name>
        <dbReference type="ChEBI" id="CHEBI:59789"/>
    </ligand>
</feature>
<feature type="binding site" evidence="1">
    <location>
        <position position="96"/>
    </location>
    <ligand>
        <name>S-adenosyl-L-methionine</name>
        <dbReference type="ChEBI" id="CHEBI:59789"/>
    </ligand>
</feature>
<feature type="binding site" evidence="1">
    <location>
        <position position="103"/>
    </location>
    <ligand>
        <name>S-adenosyl-L-methionine</name>
        <dbReference type="ChEBI" id="CHEBI:59789"/>
    </ligand>
</feature>
<gene>
    <name evidence="1" type="primary">rsmH</name>
    <name type="synonym">mraW</name>
    <name type="ordered locus">RPR_03735</name>
</gene>
<dbReference type="EC" id="2.1.1.199" evidence="1"/>
<dbReference type="EMBL" id="CP001227">
    <property type="protein sequence ID" value="ACR47470.1"/>
    <property type="molecule type" value="Genomic_DNA"/>
</dbReference>
<dbReference type="RefSeq" id="WP_012736707.1">
    <property type="nucleotide sequence ID" value="NC_012730.1"/>
</dbReference>
<dbReference type="SMR" id="C4K1M0"/>
<dbReference type="KEGG" id="rpk:RPR_03735"/>
<dbReference type="HOGENOM" id="CLU_038422_1_1_5"/>
<dbReference type="Proteomes" id="UP000005015">
    <property type="component" value="Chromosome"/>
</dbReference>
<dbReference type="GO" id="GO:0005737">
    <property type="term" value="C:cytoplasm"/>
    <property type="evidence" value="ECO:0007669"/>
    <property type="project" value="UniProtKB-SubCell"/>
</dbReference>
<dbReference type="GO" id="GO:0071424">
    <property type="term" value="F:rRNA (cytosine-N4-)-methyltransferase activity"/>
    <property type="evidence" value="ECO:0007669"/>
    <property type="project" value="UniProtKB-UniRule"/>
</dbReference>
<dbReference type="GO" id="GO:0070475">
    <property type="term" value="P:rRNA base methylation"/>
    <property type="evidence" value="ECO:0007669"/>
    <property type="project" value="UniProtKB-UniRule"/>
</dbReference>
<dbReference type="CDD" id="cd02440">
    <property type="entry name" value="AdoMet_MTases"/>
    <property type="match status" value="1"/>
</dbReference>
<dbReference type="FunFam" id="1.10.150.170:FF:000003">
    <property type="entry name" value="Ribosomal RNA small subunit methyltransferase H"/>
    <property type="match status" value="1"/>
</dbReference>
<dbReference type="Gene3D" id="1.10.150.170">
    <property type="entry name" value="Putative methyltransferase TM0872, insert domain"/>
    <property type="match status" value="1"/>
</dbReference>
<dbReference type="Gene3D" id="3.40.50.150">
    <property type="entry name" value="Vaccinia Virus protein VP39"/>
    <property type="match status" value="1"/>
</dbReference>
<dbReference type="HAMAP" id="MF_01007">
    <property type="entry name" value="16SrRNA_methyltr_H"/>
    <property type="match status" value="1"/>
</dbReference>
<dbReference type="InterPro" id="IPR002903">
    <property type="entry name" value="RsmH"/>
</dbReference>
<dbReference type="InterPro" id="IPR023397">
    <property type="entry name" value="SAM-dep_MeTrfase_MraW_recog"/>
</dbReference>
<dbReference type="InterPro" id="IPR029063">
    <property type="entry name" value="SAM-dependent_MTases_sf"/>
</dbReference>
<dbReference type="NCBIfam" id="TIGR00006">
    <property type="entry name" value="16S rRNA (cytosine(1402)-N(4))-methyltransferase RsmH"/>
    <property type="match status" value="1"/>
</dbReference>
<dbReference type="PANTHER" id="PTHR11265:SF0">
    <property type="entry name" value="12S RRNA N4-METHYLCYTIDINE METHYLTRANSFERASE"/>
    <property type="match status" value="1"/>
</dbReference>
<dbReference type="PANTHER" id="PTHR11265">
    <property type="entry name" value="S-ADENOSYL-METHYLTRANSFERASE MRAW"/>
    <property type="match status" value="1"/>
</dbReference>
<dbReference type="Pfam" id="PF01795">
    <property type="entry name" value="Methyltransf_5"/>
    <property type="match status" value="1"/>
</dbReference>
<dbReference type="PIRSF" id="PIRSF004486">
    <property type="entry name" value="MraW"/>
    <property type="match status" value="1"/>
</dbReference>
<dbReference type="SUPFAM" id="SSF81799">
    <property type="entry name" value="Putative methyltransferase TM0872, insert domain"/>
    <property type="match status" value="1"/>
</dbReference>
<dbReference type="SUPFAM" id="SSF53335">
    <property type="entry name" value="S-adenosyl-L-methionine-dependent methyltransferases"/>
    <property type="match status" value="1"/>
</dbReference>
<name>RSMH_RICPU</name>
<organism>
    <name type="scientific">Rickettsia peacockii (strain Rustic)</name>
    <dbReference type="NCBI Taxonomy" id="562019"/>
    <lineage>
        <taxon>Bacteria</taxon>
        <taxon>Pseudomonadati</taxon>
        <taxon>Pseudomonadota</taxon>
        <taxon>Alphaproteobacteria</taxon>
        <taxon>Rickettsiales</taxon>
        <taxon>Rickettsiaceae</taxon>
        <taxon>Rickettsieae</taxon>
        <taxon>Rickettsia</taxon>
        <taxon>spotted fever group</taxon>
    </lineage>
</organism>
<reference key="1">
    <citation type="journal article" date="2009" name="PLoS ONE">
        <title>Genome sequence of the endosymbiont Rickettsia peacockii and comparison with virulent Rickettsia rickettsii: identification of virulence factors.</title>
        <authorList>
            <person name="Felsheim R.F."/>
            <person name="Kurtti T.J."/>
            <person name="Munderloh U.G."/>
        </authorList>
    </citation>
    <scope>NUCLEOTIDE SEQUENCE [LARGE SCALE GENOMIC DNA]</scope>
    <source>
        <strain>Rustic</strain>
    </source>
</reference>
<evidence type="ECO:0000255" key="1">
    <source>
        <dbReference type="HAMAP-Rule" id="MF_01007"/>
    </source>
</evidence>
<proteinExistence type="inferred from homology"/>
<keyword id="KW-0963">Cytoplasm</keyword>
<keyword id="KW-0489">Methyltransferase</keyword>
<keyword id="KW-0698">rRNA processing</keyword>
<keyword id="KW-0949">S-adenosyl-L-methionine</keyword>
<keyword id="KW-0808">Transferase</keyword>
<accession>C4K1M0</accession>
<sequence length="307" mass="34520">MIQSHVSVMLNKMLEALSPKAGESYLDCTFGAGGYSKAILESCNCYVTALDRDPNVIKRAEEIQQNYGERFDFVETNFAGSFAKLKEKKFDGIVLDLGVSSMQLDIADRGFSFLHDGPLDMRMSGQGLSAEEFVNAAEAKELADVIYKYGDESFSRRIAKRIVEYRKTARIDSTGKLAEIVRSSIGFRKGKIDPATKTFQAIRIYVNDELGELEQFLVNVKNILKKDGRLVVVSFHSLEDRIVKNFFKENSEKPVVRSKYAKDDMTIDPNKWLKIITNKALAPSDKEVGLNIRARSAKLRAAKAIYE</sequence>
<protein>
    <recommendedName>
        <fullName evidence="1">Ribosomal RNA small subunit methyltransferase H</fullName>
        <ecNumber evidence="1">2.1.1.199</ecNumber>
    </recommendedName>
    <alternativeName>
        <fullName evidence="1">16S rRNA m(4)C1402 methyltransferase</fullName>
    </alternativeName>
    <alternativeName>
        <fullName evidence="1">rRNA (cytosine-N(4)-)-methyltransferase RsmH</fullName>
    </alternativeName>
</protein>